<gene>
    <name type="primary">argx</name>
    <name type="ORF">SPBC1539.03c</name>
</gene>
<feature type="chain" id="PRO_0000137726" description="Probable argininosuccinate lyase">
    <location>
        <begin position="1"/>
        <end position="460"/>
    </location>
</feature>
<feature type="active site" description="Proton acceptor" evidence="2">
    <location>
        <position position="160"/>
    </location>
</feature>
<feature type="active site" description="Proton donor" evidence="2">
    <location>
        <position position="281"/>
    </location>
</feature>
<feature type="binding site" description="in chain A" evidence="2">
    <location>
        <position position="26"/>
    </location>
    <ligand>
        <name>2-(N(omega)-L-arginino)succinate</name>
        <dbReference type="ChEBI" id="CHEBI:57472"/>
        <note>ligand shared between tetrameric partners</note>
    </ligand>
</feature>
<feature type="binding site" description="in chain A" evidence="2">
    <location>
        <position position="114"/>
    </location>
    <ligand>
        <name>2-(N(omega)-L-arginino)succinate</name>
        <dbReference type="ChEBI" id="CHEBI:57472"/>
        <note>ligand shared between tetrameric partners</note>
    </ligand>
</feature>
<feature type="binding site" description="in chain C" evidence="2">
    <location>
        <position position="159"/>
    </location>
    <ligand>
        <name>2-(N(omega)-L-arginino)succinate</name>
        <dbReference type="ChEBI" id="CHEBI:57472"/>
        <note>ligand shared between tetrameric partners</note>
    </ligand>
</feature>
<feature type="binding site" description="in chain B" evidence="2">
    <location>
        <position position="289"/>
    </location>
    <ligand>
        <name>2-(N(omega)-L-arginino)succinate</name>
        <dbReference type="ChEBI" id="CHEBI:57472"/>
        <note>ligand shared between tetrameric partners</note>
    </ligand>
</feature>
<feature type="binding site" description="in chain A" evidence="2">
    <location>
        <position position="321"/>
    </location>
    <ligand>
        <name>2-(N(omega)-L-arginino)succinate</name>
        <dbReference type="ChEBI" id="CHEBI:57472"/>
        <note>ligand shared between tetrameric partners</note>
    </ligand>
</feature>
<feature type="binding site" description="in chain A" evidence="2">
    <location>
        <position position="326"/>
    </location>
    <ligand>
        <name>2-(N(omega)-L-arginino)succinate</name>
        <dbReference type="ChEBI" id="CHEBI:57472"/>
        <note>ligand shared between tetrameric partners</note>
    </ligand>
</feature>
<feature type="binding site" description="in chain A" evidence="2">
    <location>
        <position position="329"/>
    </location>
    <ligand>
        <name>2-(N(omega)-L-arginino)succinate</name>
        <dbReference type="ChEBI" id="CHEBI:57472"/>
        <note>ligand shared between tetrameric partners</note>
    </ligand>
</feature>
<feature type="site" description="Increases basicity of active site His" evidence="2">
    <location>
        <position position="294"/>
    </location>
</feature>
<accession>P50514</accession>
<protein>
    <recommendedName>
        <fullName>Probable argininosuccinate lyase</fullName>
        <shortName>ASAL</shortName>
        <ecNumber>4.3.2.1</ecNumber>
    </recommendedName>
    <alternativeName>
        <fullName>Arginosuccinase</fullName>
    </alternativeName>
</protein>
<keyword id="KW-0028">Amino-acid biosynthesis</keyword>
<keyword id="KW-0055">Arginine biosynthesis</keyword>
<keyword id="KW-0456">Lyase</keyword>
<keyword id="KW-1185">Reference proteome</keyword>
<proteinExistence type="inferred from homology"/>
<reference key="1">
    <citation type="submission" date="1994-08" db="EMBL/GenBank/DDBJ databases">
        <authorList>
            <person name="Shpakovski G.V."/>
        </authorList>
    </citation>
    <scope>NUCLEOTIDE SEQUENCE [GENOMIC DNA]</scope>
    <source>
        <strain>972 / ATCC 24843</strain>
    </source>
</reference>
<reference key="2">
    <citation type="journal article" date="2002" name="Nature">
        <title>The genome sequence of Schizosaccharomyces pombe.</title>
        <authorList>
            <person name="Wood V."/>
            <person name="Gwilliam R."/>
            <person name="Rajandream M.A."/>
            <person name="Lyne M.H."/>
            <person name="Lyne R."/>
            <person name="Stewart A."/>
            <person name="Sgouros J.G."/>
            <person name="Peat N."/>
            <person name="Hayles J."/>
            <person name="Baker S.G."/>
            <person name="Basham D."/>
            <person name="Bowman S."/>
            <person name="Brooks K."/>
            <person name="Brown D."/>
            <person name="Brown S."/>
            <person name="Chillingworth T."/>
            <person name="Churcher C.M."/>
            <person name="Collins M."/>
            <person name="Connor R."/>
            <person name="Cronin A."/>
            <person name="Davis P."/>
            <person name="Feltwell T."/>
            <person name="Fraser A."/>
            <person name="Gentles S."/>
            <person name="Goble A."/>
            <person name="Hamlin N."/>
            <person name="Harris D.E."/>
            <person name="Hidalgo J."/>
            <person name="Hodgson G."/>
            <person name="Holroyd S."/>
            <person name="Hornsby T."/>
            <person name="Howarth S."/>
            <person name="Huckle E.J."/>
            <person name="Hunt S."/>
            <person name="Jagels K."/>
            <person name="James K.D."/>
            <person name="Jones L."/>
            <person name="Jones M."/>
            <person name="Leather S."/>
            <person name="McDonald S."/>
            <person name="McLean J."/>
            <person name="Mooney P."/>
            <person name="Moule S."/>
            <person name="Mungall K.L."/>
            <person name="Murphy L.D."/>
            <person name="Niblett D."/>
            <person name="Odell C."/>
            <person name="Oliver K."/>
            <person name="O'Neil S."/>
            <person name="Pearson D."/>
            <person name="Quail M.A."/>
            <person name="Rabbinowitsch E."/>
            <person name="Rutherford K.M."/>
            <person name="Rutter S."/>
            <person name="Saunders D."/>
            <person name="Seeger K."/>
            <person name="Sharp S."/>
            <person name="Skelton J."/>
            <person name="Simmonds M.N."/>
            <person name="Squares R."/>
            <person name="Squares S."/>
            <person name="Stevens K."/>
            <person name="Taylor K."/>
            <person name="Taylor R.G."/>
            <person name="Tivey A."/>
            <person name="Walsh S.V."/>
            <person name="Warren T."/>
            <person name="Whitehead S."/>
            <person name="Woodward J.R."/>
            <person name="Volckaert G."/>
            <person name="Aert R."/>
            <person name="Robben J."/>
            <person name="Grymonprez B."/>
            <person name="Weltjens I."/>
            <person name="Vanstreels E."/>
            <person name="Rieger M."/>
            <person name="Schaefer M."/>
            <person name="Mueller-Auer S."/>
            <person name="Gabel C."/>
            <person name="Fuchs M."/>
            <person name="Duesterhoeft A."/>
            <person name="Fritzc C."/>
            <person name="Holzer E."/>
            <person name="Moestl D."/>
            <person name="Hilbert H."/>
            <person name="Borzym K."/>
            <person name="Langer I."/>
            <person name="Beck A."/>
            <person name="Lehrach H."/>
            <person name="Reinhardt R."/>
            <person name="Pohl T.M."/>
            <person name="Eger P."/>
            <person name="Zimmermann W."/>
            <person name="Wedler H."/>
            <person name="Wambutt R."/>
            <person name="Purnelle B."/>
            <person name="Goffeau A."/>
            <person name="Cadieu E."/>
            <person name="Dreano S."/>
            <person name="Gloux S."/>
            <person name="Lelaure V."/>
            <person name="Mottier S."/>
            <person name="Galibert F."/>
            <person name="Aves S.J."/>
            <person name="Xiang Z."/>
            <person name="Hunt C."/>
            <person name="Moore K."/>
            <person name="Hurst S.M."/>
            <person name="Lucas M."/>
            <person name="Rochet M."/>
            <person name="Gaillardin C."/>
            <person name="Tallada V.A."/>
            <person name="Garzon A."/>
            <person name="Thode G."/>
            <person name="Daga R.R."/>
            <person name="Cruzado L."/>
            <person name="Jimenez J."/>
            <person name="Sanchez M."/>
            <person name="del Rey F."/>
            <person name="Benito J."/>
            <person name="Dominguez A."/>
            <person name="Revuelta J.L."/>
            <person name="Moreno S."/>
            <person name="Armstrong J."/>
            <person name="Forsburg S.L."/>
            <person name="Cerutti L."/>
            <person name="Lowe T."/>
            <person name="McCombie W.R."/>
            <person name="Paulsen I."/>
            <person name="Potashkin J."/>
            <person name="Shpakovski G.V."/>
            <person name="Ussery D."/>
            <person name="Barrell B.G."/>
            <person name="Nurse P."/>
        </authorList>
    </citation>
    <scope>NUCLEOTIDE SEQUENCE [LARGE SCALE GENOMIC DNA]</scope>
    <source>
        <strain>972 / ATCC 24843</strain>
    </source>
</reference>
<sequence>MASSQKLWGGRFTGATDPLMTAYNESIHYDKRMFNADIDGSKAYAKALEQRGIISADELDKMLDGLEAVRDEWKTNKFTLQPSDEDIHTANERRLGEIIGTGIAGKLHTGRSRNDQVTTDMRLWLRDELDIIQKSLVGLLQVFVARAESDLDIIMPGYTHLQRAQPIRWSHFLLSHAFSILNDLDRLKQIYSRVNRLPLGAGALAGNPFAVDRKFLQKELGFEGVIMNSMNAVADRDYVIEFMFWASMVMTHISRLAEDLIIYSTSEFNFVTLSDAYSTGSSIMPQKKNPDSLELLRGKSGRVFGNMMGFMVSVKGIPSTYNKDLQEDKEPLFDSSKTVLDSIQILTGVLSTLTVNPENIAKSLTADMLATDLAEYLVRKGVPFRETHHISGSAVRMAEERNTTIDKLSVEDFKSLHPLYEEDVADVFNYESSVEKRCAIGGTAKSCVLEQIQTIKKALE</sequence>
<organism>
    <name type="scientific">Schizosaccharomyces pombe (strain 972 / ATCC 24843)</name>
    <name type="common">Fission yeast</name>
    <dbReference type="NCBI Taxonomy" id="284812"/>
    <lineage>
        <taxon>Eukaryota</taxon>
        <taxon>Fungi</taxon>
        <taxon>Dikarya</taxon>
        <taxon>Ascomycota</taxon>
        <taxon>Taphrinomycotina</taxon>
        <taxon>Schizosaccharomycetes</taxon>
        <taxon>Schizosaccharomycetales</taxon>
        <taxon>Schizosaccharomycetaceae</taxon>
        <taxon>Schizosaccharomyces</taxon>
    </lineage>
</organism>
<evidence type="ECO:0000250" key="1"/>
<evidence type="ECO:0000250" key="2">
    <source>
        <dbReference type="UniProtKB" id="P24058"/>
    </source>
</evidence>
<evidence type="ECO:0000305" key="3"/>
<name>ARLZ_SCHPO</name>
<dbReference type="EC" id="4.3.2.1"/>
<dbReference type="EMBL" id="U13259">
    <property type="protein sequence ID" value="AAA58961.1"/>
    <property type="molecule type" value="Genomic_DNA"/>
</dbReference>
<dbReference type="EMBL" id="CU329671">
    <property type="protein sequence ID" value="CAB51335.1"/>
    <property type="molecule type" value="Genomic_DNA"/>
</dbReference>
<dbReference type="PIR" id="T39462">
    <property type="entry name" value="T39462"/>
</dbReference>
<dbReference type="SMR" id="P50514"/>
<dbReference type="BioGRID" id="276494">
    <property type="interactions" value="3"/>
</dbReference>
<dbReference type="FunCoup" id="P50514">
    <property type="interactions" value="464"/>
</dbReference>
<dbReference type="STRING" id="284812.P50514"/>
<dbReference type="iPTMnet" id="P50514"/>
<dbReference type="PaxDb" id="4896-SPBC1539.03c.1"/>
<dbReference type="EnsemblFungi" id="SPBC1539.03c.1">
    <property type="protein sequence ID" value="SPBC1539.03c.1:pep"/>
    <property type="gene ID" value="SPBC1539.03c"/>
</dbReference>
<dbReference type="KEGG" id="spo:2539950"/>
<dbReference type="PomBase" id="SPBC1539.03c"/>
<dbReference type="VEuPathDB" id="FungiDB:SPBC1539.03c"/>
<dbReference type="eggNOG" id="KOG1316">
    <property type="taxonomic scope" value="Eukaryota"/>
</dbReference>
<dbReference type="HOGENOM" id="CLU_027272_2_1_1"/>
<dbReference type="InParanoid" id="P50514"/>
<dbReference type="OMA" id="DFAIEFC"/>
<dbReference type="PhylomeDB" id="P50514"/>
<dbReference type="Reactome" id="R-SPO-70635">
    <property type="pathway name" value="Urea cycle"/>
</dbReference>
<dbReference type="UniPathway" id="UPA00068">
    <property type="reaction ID" value="UER00114"/>
</dbReference>
<dbReference type="PRO" id="PR:P50514"/>
<dbReference type="Proteomes" id="UP000002485">
    <property type="component" value="Chromosome II"/>
</dbReference>
<dbReference type="GO" id="GO:0005829">
    <property type="term" value="C:cytosol"/>
    <property type="evidence" value="ECO:0007005"/>
    <property type="project" value="PomBase"/>
</dbReference>
<dbReference type="GO" id="GO:0004056">
    <property type="term" value="F:argininosuccinate lyase activity"/>
    <property type="evidence" value="ECO:0000318"/>
    <property type="project" value="GO_Central"/>
</dbReference>
<dbReference type="GO" id="GO:0042450">
    <property type="term" value="P:arginine biosynthetic process via ornithine"/>
    <property type="evidence" value="ECO:0000269"/>
    <property type="project" value="PomBase"/>
</dbReference>
<dbReference type="GO" id="GO:0006526">
    <property type="term" value="P:L-arginine biosynthetic process"/>
    <property type="evidence" value="ECO:0000266"/>
    <property type="project" value="PomBase"/>
</dbReference>
<dbReference type="GO" id="GO:0000050">
    <property type="term" value="P:urea cycle"/>
    <property type="evidence" value="ECO:0000305"/>
    <property type="project" value="PomBase"/>
</dbReference>
<dbReference type="CDD" id="cd01359">
    <property type="entry name" value="Argininosuccinate_lyase"/>
    <property type="match status" value="1"/>
</dbReference>
<dbReference type="FunFam" id="1.10.275.10:FF:000002">
    <property type="entry name" value="Argininosuccinate lyase"/>
    <property type="match status" value="1"/>
</dbReference>
<dbReference type="FunFam" id="1.10.40.30:FF:000001">
    <property type="entry name" value="Argininosuccinate lyase"/>
    <property type="match status" value="1"/>
</dbReference>
<dbReference type="FunFam" id="1.20.200.10:FF:000025">
    <property type="entry name" value="Argininosuccinate lyase chloroplastic"/>
    <property type="match status" value="1"/>
</dbReference>
<dbReference type="Gene3D" id="1.10.40.30">
    <property type="entry name" value="Fumarase/aspartase (C-terminal domain)"/>
    <property type="match status" value="1"/>
</dbReference>
<dbReference type="Gene3D" id="1.20.200.10">
    <property type="entry name" value="Fumarase/aspartase (Central domain)"/>
    <property type="match status" value="1"/>
</dbReference>
<dbReference type="Gene3D" id="1.10.275.10">
    <property type="entry name" value="Fumarase/aspartase (N-terminal domain)"/>
    <property type="match status" value="1"/>
</dbReference>
<dbReference type="HAMAP" id="MF_00006">
    <property type="entry name" value="Arg_succ_lyase"/>
    <property type="match status" value="1"/>
</dbReference>
<dbReference type="InterPro" id="IPR029419">
    <property type="entry name" value="Arg_succ_lyase_C"/>
</dbReference>
<dbReference type="InterPro" id="IPR009049">
    <property type="entry name" value="Argininosuccinate_lyase"/>
</dbReference>
<dbReference type="InterPro" id="IPR024083">
    <property type="entry name" value="Fumarase/histidase_N"/>
</dbReference>
<dbReference type="InterPro" id="IPR020557">
    <property type="entry name" value="Fumarate_lyase_CS"/>
</dbReference>
<dbReference type="InterPro" id="IPR000362">
    <property type="entry name" value="Fumarate_lyase_fam"/>
</dbReference>
<dbReference type="InterPro" id="IPR022761">
    <property type="entry name" value="Fumarate_lyase_N"/>
</dbReference>
<dbReference type="InterPro" id="IPR008948">
    <property type="entry name" value="L-Aspartase-like"/>
</dbReference>
<dbReference type="NCBIfam" id="TIGR00838">
    <property type="entry name" value="argH"/>
    <property type="match status" value="1"/>
</dbReference>
<dbReference type="PANTHER" id="PTHR43814">
    <property type="entry name" value="ARGININOSUCCINATE LYASE"/>
    <property type="match status" value="1"/>
</dbReference>
<dbReference type="PANTHER" id="PTHR43814:SF1">
    <property type="entry name" value="ARGININOSUCCINATE LYASE"/>
    <property type="match status" value="1"/>
</dbReference>
<dbReference type="Pfam" id="PF14698">
    <property type="entry name" value="ASL_C2"/>
    <property type="match status" value="1"/>
</dbReference>
<dbReference type="Pfam" id="PF00206">
    <property type="entry name" value="Lyase_1"/>
    <property type="match status" value="1"/>
</dbReference>
<dbReference type="PRINTS" id="PR00145">
    <property type="entry name" value="ARGSUCLYASE"/>
</dbReference>
<dbReference type="PRINTS" id="PR00149">
    <property type="entry name" value="FUMRATELYASE"/>
</dbReference>
<dbReference type="SUPFAM" id="SSF48557">
    <property type="entry name" value="L-aspartase-like"/>
    <property type="match status" value="1"/>
</dbReference>
<dbReference type="PROSITE" id="PS00163">
    <property type="entry name" value="FUMARATE_LYASES"/>
    <property type="match status" value="1"/>
</dbReference>
<comment type="catalytic activity">
    <reaction>
        <text>2-(N(omega)-L-arginino)succinate = fumarate + L-arginine</text>
        <dbReference type="Rhea" id="RHEA:24020"/>
        <dbReference type="ChEBI" id="CHEBI:29806"/>
        <dbReference type="ChEBI" id="CHEBI:32682"/>
        <dbReference type="ChEBI" id="CHEBI:57472"/>
        <dbReference type="EC" id="4.3.2.1"/>
    </reaction>
</comment>
<comment type="pathway">
    <text>Amino-acid biosynthesis; L-arginine biosynthesis; L-arginine from L-ornithine and carbamoyl phosphate: step 3/3.</text>
</comment>
<comment type="subunit">
    <text evidence="1">Homotetramer.</text>
</comment>
<comment type="similarity">
    <text evidence="3">Belongs to the lyase 1 family. Argininosuccinate lyase subfamily.</text>
</comment>